<organism>
    <name type="scientific">Bos taurus</name>
    <name type="common">Bovine</name>
    <dbReference type="NCBI Taxonomy" id="9913"/>
    <lineage>
        <taxon>Eukaryota</taxon>
        <taxon>Metazoa</taxon>
        <taxon>Chordata</taxon>
        <taxon>Craniata</taxon>
        <taxon>Vertebrata</taxon>
        <taxon>Euteleostomi</taxon>
        <taxon>Mammalia</taxon>
        <taxon>Eutheria</taxon>
        <taxon>Laurasiatheria</taxon>
        <taxon>Artiodactyla</taxon>
        <taxon>Ruminantia</taxon>
        <taxon>Pecora</taxon>
        <taxon>Bovidae</taxon>
        <taxon>Bovinae</taxon>
        <taxon>Bos</taxon>
    </lineage>
</organism>
<feature type="chain" id="PRO_0000419629" description="Aurora kinase A- and ninein-interacting protein">
    <location>
        <begin position="1"/>
        <end position="357"/>
    </location>
</feature>
<feature type="region of interest" description="Disordered" evidence="2">
    <location>
        <begin position="72"/>
        <end position="102"/>
    </location>
</feature>
<feature type="region of interest" description="Interaction with AURKA" evidence="1">
    <location>
        <begin position="189"/>
        <end position="357"/>
    </location>
</feature>
<feature type="region of interest" description="Interaction with RBBP8/CtIP" evidence="1">
    <location>
        <begin position="281"/>
        <end position="357"/>
    </location>
</feature>
<feature type="compositionally biased region" description="Polar residues" evidence="2">
    <location>
        <begin position="72"/>
        <end position="93"/>
    </location>
</feature>
<feature type="modified residue" description="Phosphoserine" evidence="1">
    <location>
        <position position="292"/>
    </location>
</feature>
<dbReference type="EMBL" id="DAAA02006388">
    <property type="status" value="NOT_ANNOTATED_CDS"/>
    <property type="molecule type" value="Genomic_DNA"/>
</dbReference>
<dbReference type="EMBL" id="BC134777">
    <property type="protein sequence ID" value="AAI34778.1"/>
    <property type="molecule type" value="mRNA"/>
</dbReference>
<dbReference type="RefSeq" id="NP_001077211.1">
    <property type="nucleotide sequence ID" value="NM_001083742.1"/>
</dbReference>
<dbReference type="FunCoup" id="A4IFU8">
    <property type="interactions" value="330"/>
</dbReference>
<dbReference type="STRING" id="9913.ENSBTAP00000029039"/>
<dbReference type="PaxDb" id="9913-ENSBTAP00000029039"/>
<dbReference type="GeneID" id="539251"/>
<dbReference type="KEGG" id="bta:539251"/>
<dbReference type="CTD" id="79000"/>
<dbReference type="VEuPathDB" id="HostDB:ENSBTAG00000021786"/>
<dbReference type="eggNOG" id="ENOG502SFBZ">
    <property type="taxonomic scope" value="Eukaryota"/>
</dbReference>
<dbReference type="HOGENOM" id="CLU_835590_0_0_1"/>
<dbReference type="InParanoid" id="A4IFU8"/>
<dbReference type="OMA" id="VTNNQNR"/>
<dbReference type="OrthoDB" id="9946974at2759"/>
<dbReference type="TreeFam" id="TF337334"/>
<dbReference type="Proteomes" id="UP000009136">
    <property type="component" value="Chromosome 2"/>
</dbReference>
<dbReference type="Bgee" id="ENSBTAG00000021786">
    <property type="expression patterns" value="Expressed in oocyte and 103 other cell types or tissues"/>
</dbReference>
<dbReference type="GO" id="GO:0005813">
    <property type="term" value="C:centrosome"/>
    <property type="evidence" value="ECO:0000250"/>
    <property type="project" value="UniProtKB"/>
</dbReference>
<dbReference type="GO" id="GO:0005737">
    <property type="term" value="C:cytoplasm"/>
    <property type="evidence" value="ECO:0007669"/>
    <property type="project" value="UniProtKB-KW"/>
</dbReference>
<dbReference type="GO" id="GO:0005634">
    <property type="term" value="C:nucleus"/>
    <property type="evidence" value="ECO:0007669"/>
    <property type="project" value="UniProtKB-SubCell"/>
</dbReference>
<dbReference type="GO" id="GO:0090734">
    <property type="term" value="C:site of DNA damage"/>
    <property type="evidence" value="ECO:0000250"/>
    <property type="project" value="UniProtKB"/>
</dbReference>
<dbReference type="GO" id="GO:0000922">
    <property type="term" value="C:spindle pole"/>
    <property type="evidence" value="ECO:0000250"/>
    <property type="project" value="UniProtKB"/>
</dbReference>
<dbReference type="GO" id="GO:0003684">
    <property type="term" value="F:damaged DNA binding"/>
    <property type="evidence" value="ECO:0000250"/>
    <property type="project" value="UniProtKB"/>
</dbReference>
<dbReference type="GO" id="GO:0000724">
    <property type="term" value="P:double-strand break repair via homologous recombination"/>
    <property type="evidence" value="ECO:0000250"/>
    <property type="project" value="UniProtKB"/>
</dbReference>
<dbReference type="GO" id="GO:2001033">
    <property type="term" value="P:negative regulation of double-strand break repair via nonhomologous end joining"/>
    <property type="evidence" value="ECO:0000250"/>
    <property type="project" value="UniProtKB"/>
</dbReference>
<dbReference type="GO" id="GO:0007051">
    <property type="term" value="P:spindle organization"/>
    <property type="evidence" value="ECO:0000250"/>
    <property type="project" value="UniProtKB"/>
</dbReference>
<dbReference type="InterPro" id="IPR029286">
    <property type="entry name" value="AUNIP"/>
</dbReference>
<dbReference type="PANTHER" id="PTHR14526">
    <property type="entry name" value="AURORA KINASE A AND NINEIN-INTERACTING PROTEIN"/>
    <property type="match status" value="1"/>
</dbReference>
<dbReference type="PANTHER" id="PTHR14526:SF2">
    <property type="entry name" value="AURORA KINASE A AND NINEIN-INTERACTING PROTEIN"/>
    <property type="match status" value="1"/>
</dbReference>
<dbReference type="Pfam" id="PF15334">
    <property type="entry name" value="AIB"/>
    <property type="match status" value="1"/>
</dbReference>
<proteinExistence type="evidence at transcript level"/>
<comment type="function">
    <text evidence="1">DNA-binding protein that accumulates at DNA double-strand breaks (DSBs) following DNA damage and promotes DNA resection and homologous recombination. Serves as a sensor of DNA damage: binds DNA with a strong preference for DNA substrates that mimic structures generated at stalled replication forks, and anchors RBBP8/CtIP to DSB sites to promote DNA end resection and ensuing homologous recombination repair. Inhibits non-homologous end joining (NHEJ). Required for the dynamic movement of AURKA at the centrosomes and spindle apparatus during the cell cycle.</text>
</comment>
<comment type="subunit">
    <text evidence="1">Interacts (via C-terminus) with AURKA (via C-terminus). Interacts (via N-terminus) with NIN; this interaction blocks NIN phosphorylation by both AURKA and GSK3B. Identified in a complex with NIN and AURKA. Interacts with RBBP8/CtIP.</text>
</comment>
<comment type="subcellular location">
    <subcellularLocation>
        <location evidence="1">Nucleus</location>
    </subcellularLocation>
    <subcellularLocation>
        <location evidence="1">Chromosome</location>
    </subcellularLocation>
    <subcellularLocation>
        <location evidence="1">Cytoplasm</location>
        <location evidence="1">Cytoskeleton</location>
        <location evidence="1">Microtubule organizing center</location>
        <location evidence="1">Centrosome</location>
    </subcellularLocation>
    <subcellularLocation>
        <location evidence="1">Cytoplasm</location>
        <location evidence="1">Cytoskeleton</location>
        <location evidence="1">Spindle pole</location>
    </subcellularLocation>
    <text evidence="1">Accumulates at sites of DNA damage by binding to DNA substrates that mimick structures generated at stalled replication forks. Localizes to the centrosome in interphase and to the spindle pole in metaphase.</text>
</comment>
<comment type="similarity">
    <text evidence="3">Belongs to the AUNIP family.</text>
</comment>
<protein>
    <recommendedName>
        <fullName evidence="3">Aurora kinase A- and ninein-interacting protein</fullName>
    </recommendedName>
</protein>
<sequence length="357" mass="39634">MRRRGPEKEEEACGVWLDAAALKRRKTQTQLIKSSTKMLTLLPGERKAKISFTQRSCPSAGTRQTSIASFLTSQQGKTNGADQRSVSSHTESQTNKESKEDATQLEHLTQGLRADFMAPPLATSTPADIQEARLSPQSLKASCQHGIGTPYLTVPCLFRPDTSVCAGASKASLACSFAHDLESSCLLDQKEGEDSSCEREWLQGSKKNNYQSVERHSKTTGHKGHQLLDKTNLENVSAKRSRQAPVLQTYKDSRRGANMKAVKQSSCPIPGFSWDSERNDKDSWSQLFTEDSQGQRVIAHNSRAPFRDVTNDQNQGYGRVPNSLWAQCQDRTTQFNLQPDSLFTQDSEGNQVIRHQA</sequence>
<reference key="1">
    <citation type="journal article" date="2009" name="Genome Biol.">
        <title>A whole-genome assembly of the domestic cow, Bos taurus.</title>
        <authorList>
            <person name="Zimin A.V."/>
            <person name="Delcher A.L."/>
            <person name="Florea L."/>
            <person name="Kelley D.R."/>
            <person name="Schatz M.C."/>
            <person name="Puiu D."/>
            <person name="Hanrahan F."/>
            <person name="Pertea G."/>
            <person name="Van Tassell C.P."/>
            <person name="Sonstegard T.S."/>
            <person name="Marcais G."/>
            <person name="Roberts M."/>
            <person name="Subramanian P."/>
            <person name="Yorke J.A."/>
            <person name="Salzberg S.L."/>
        </authorList>
    </citation>
    <scope>NUCLEOTIDE SEQUENCE [LARGE SCALE GENOMIC DNA]</scope>
    <source>
        <strain>Hereford</strain>
    </source>
</reference>
<reference key="2">
    <citation type="submission" date="2007-03" db="EMBL/GenBank/DDBJ databases">
        <authorList>
            <consortium name="NIH - Mammalian Gene Collection (MGC) project"/>
        </authorList>
    </citation>
    <scope>NUCLEOTIDE SEQUENCE [LARGE SCALE MRNA]</scope>
    <source>
        <strain>Hereford</strain>
        <tissue>Thymus</tissue>
    </source>
</reference>
<name>AUNIP_BOVIN</name>
<keyword id="KW-0158">Chromosome</keyword>
<keyword id="KW-0963">Cytoplasm</keyword>
<keyword id="KW-0206">Cytoskeleton</keyword>
<keyword id="KW-0227">DNA damage</keyword>
<keyword id="KW-0234">DNA repair</keyword>
<keyword id="KW-0238">DNA-binding</keyword>
<keyword id="KW-0539">Nucleus</keyword>
<keyword id="KW-0597">Phosphoprotein</keyword>
<keyword id="KW-1185">Reference proteome</keyword>
<evidence type="ECO:0000250" key="1">
    <source>
        <dbReference type="UniProtKB" id="Q9H7T9"/>
    </source>
</evidence>
<evidence type="ECO:0000256" key="2">
    <source>
        <dbReference type="SAM" id="MobiDB-lite"/>
    </source>
</evidence>
<evidence type="ECO:0000305" key="3"/>
<accession>A4IFU8</accession>
<gene>
    <name evidence="1" type="primary">AUNIP</name>
</gene>